<sequence length="117" mass="12456">MTMRTSSLLLAAVAVVAIVAGATAATVGSWEPVDINDPHVQELGRWAVAEEDRGVAAGGLTFERVTDGEKQVVAGVNYRLTLEASSSGAKDGRYEAVVYEQDPRSNARKLVSFEPIH</sequence>
<organism>
    <name type="scientific">Oryza sativa subsp. japonica</name>
    <name type="common">Rice</name>
    <dbReference type="NCBI Taxonomy" id="39947"/>
    <lineage>
        <taxon>Eukaryota</taxon>
        <taxon>Viridiplantae</taxon>
        <taxon>Streptophyta</taxon>
        <taxon>Embryophyta</taxon>
        <taxon>Tracheophyta</taxon>
        <taxon>Spermatophyta</taxon>
        <taxon>Magnoliopsida</taxon>
        <taxon>Liliopsida</taxon>
        <taxon>Poales</taxon>
        <taxon>Poaceae</taxon>
        <taxon>BOP clade</taxon>
        <taxon>Oryzoideae</taxon>
        <taxon>Oryzeae</taxon>
        <taxon>Oryzinae</taxon>
        <taxon>Oryza</taxon>
        <taxon>Oryza sativa</taxon>
    </lineage>
</organism>
<keyword id="KW-0611">Plant defense</keyword>
<keyword id="KW-0646">Protease inhibitor</keyword>
<keyword id="KW-1185">Reference proteome</keyword>
<keyword id="KW-0964">Secreted</keyword>
<keyword id="KW-0732">Signal</keyword>
<keyword id="KW-0789">Thiol protease inhibitor</keyword>
<name>CYT7_ORYSJ</name>
<proteinExistence type="inferred from homology"/>
<accession>Q10Q47</accession>
<accession>A3AFC9</accession>
<protein>
    <recommendedName>
        <fullName>Putative cysteine proteinase inhibitor 7</fullName>
    </recommendedName>
    <alternativeName>
        <fullName>Oryzacystatin VII</fullName>
        <shortName>OC-VII</shortName>
    </alternativeName>
    <alternativeName>
        <fullName>Oryzacystatin-7</fullName>
    </alternativeName>
</protein>
<reference key="1">
    <citation type="journal article" date="2005" name="Genome Res.">
        <title>Sequence, annotation, and analysis of synteny between rice chromosome 3 and diverged grass species.</title>
        <authorList>
            <consortium name="The rice chromosome 3 sequencing consortium"/>
            <person name="Buell C.R."/>
            <person name="Yuan Q."/>
            <person name="Ouyang S."/>
            <person name="Liu J."/>
            <person name="Zhu W."/>
            <person name="Wang A."/>
            <person name="Maiti R."/>
            <person name="Haas B."/>
            <person name="Wortman J."/>
            <person name="Pertea M."/>
            <person name="Jones K.M."/>
            <person name="Kim M."/>
            <person name="Overton L."/>
            <person name="Tsitrin T."/>
            <person name="Fadrosh D."/>
            <person name="Bera J."/>
            <person name="Weaver B."/>
            <person name="Jin S."/>
            <person name="Johri S."/>
            <person name="Reardon M."/>
            <person name="Webb K."/>
            <person name="Hill J."/>
            <person name="Moffat K."/>
            <person name="Tallon L."/>
            <person name="Van Aken S."/>
            <person name="Lewis M."/>
            <person name="Utterback T."/>
            <person name="Feldblyum T."/>
            <person name="Zismann V."/>
            <person name="Iobst S."/>
            <person name="Hsiao J."/>
            <person name="de Vazeille A.R."/>
            <person name="Salzberg S.L."/>
            <person name="White O."/>
            <person name="Fraser C.M."/>
            <person name="Yu Y."/>
            <person name="Kim H."/>
            <person name="Rambo T."/>
            <person name="Currie J."/>
            <person name="Collura K."/>
            <person name="Kernodle-Thompson S."/>
            <person name="Wei F."/>
            <person name="Kudrna K."/>
            <person name="Ammiraju J.S.S."/>
            <person name="Luo M."/>
            <person name="Goicoechea J.L."/>
            <person name="Wing R.A."/>
            <person name="Henry D."/>
            <person name="Oates R."/>
            <person name="Palmer M."/>
            <person name="Pries G."/>
            <person name="Saski C."/>
            <person name="Simmons J."/>
            <person name="Soderlund C."/>
            <person name="Nelson W."/>
            <person name="de la Bastide M."/>
            <person name="Spiegel L."/>
            <person name="Nascimento L."/>
            <person name="Huang E."/>
            <person name="Preston R."/>
            <person name="Zutavern T."/>
            <person name="Palmer L."/>
            <person name="O'Shaughnessy A."/>
            <person name="Dike S."/>
            <person name="McCombie W.R."/>
            <person name="Minx P."/>
            <person name="Cordum H."/>
            <person name="Wilson R."/>
            <person name="Jin W."/>
            <person name="Lee H.R."/>
            <person name="Jiang J."/>
            <person name="Jackson S."/>
        </authorList>
    </citation>
    <scope>NUCLEOTIDE SEQUENCE [LARGE SCALE GENOMIC DNA]</scope>
    <source>
        <strain>cv. Nipponbare</strain>
    </source>
</reference>
<reference key="2">
    <citation type="journal article" date="2005" name="Nature">
        <title>The map-based sequence of the rice genome.</title>
        <authorList>
            <consortium name="International rice genome sequencing project (IRGSP)"/>
        </authorList>
    </citation>
    <scope>NUCLEOTIDE SEQUENCE [LARGE SCALE GENOMIC DNA]</scope>
    <source>
        <strain>cv. Nipponbare</strain>
    </source>
</reference>
<reference key="3">
    <citation type="journal article" date="2008" name="Nucleic Acids Res.">
        <title>The rice annotation project database (RAP-DB): 2008 update.</title>
        <authorList>
            <consortium name="The rice annotation project (RAP)"/>
        </authorList>
    </citation>
    <scope>GENOME REANNOTATION</scope>
    <source>
        <strain>cv. Nipponbare</strain>
    </source>
</reference>
<reference key="4">
    <citation type="journal article" date="2013" name="Rice">
        <title>Improvement of the Oryza sativa Nipponbare reference genome using next generation sequence and optical map data.</title>
        <authorList>
            <person name="Kawahara Y."/>
            <person name="de la Bastide M."/>
            <person name="Hamilton J.P."/>
            <person name="Kanamori H."/>
            <person name="McCombie W.R."/>
            <person name="Ouyang S."/>
            <person name="Schwartz D.C."/>
            <person name="Tanaka T."/>
            <person name="Wu J."/>
            <person name="Zhou S."/>
            <person name="Childs K.L."/>
            <person name="Davidson R.M."/>
            <person name="Lin H."/>
            <person name="Quesada-Ocampo L."/>
            <person name="Vaillancourt B."/>
            <person name="Sakai H."/>
            <person name="Lee S.S."/>
            <person name="Kim J."/>
            <person name="Numa H."/>
            <person name="Itoh T."/>
            <person name="Buell C.R."/>
            <person name="Matsumoto T."/>
        </authorList>
    </citation>
    <scope>GENOME REANNOTATION</scope>
    <source>
        <strain>cv. Nipponbare</strain>
    </source>
</reference>
<reference key="5">
    <citation type="journal article" date="2005" name="PLoS Biol.">
        <title>The genomes of Oryza sativa: a history of duplications.</title>
        <authorList>
            <person name="Yu J."/>
            <person name="Wang J."/>
            <person name="Lin W."/>
            <person name="Li S."/>
            <person name="Li H."/>
            <person name="Zhou J."/>
            <person name="Ni P."/>
            <person name="Dong W."/>
            <person name="Hu S."/>
            <person name="Zeng C."/>
            <person name="Zhang J."/>
            <person name="Zhang Y."/>
            <person name="Li R."/>
            <person name="Xu Z."/>
            <person name="Li S."/>
            <person name="Li X."/>
            <person name="Zheng H."/>
            <person name="Cong L."/>
            <person name="Lin L."/>
            <person name="Yin J."/>
            <person name="Geng J."/>
            <person name="Li G."/>
            <person name="Shi J."/>
            <person name="Liu J."/>
            <person name="Lv H."/>
            <person name="Li J."/>
            <person name="Wang J."/>
            <person name="Deng Y."/>
            <person name="Ran L."/>
            <person name="Shi X."/>
            <person name="Wang X."/>
            <person name="Wu Q."/>
            <person name="Li C."/>
            <person name="Ren X."/>
            <person name="Wang J."/>
            <person name="Wang X."/>
            <person name="Li D."/>
            <person name="Liu D."/>
            <person name="Zhang X."/>
            <person name="Ji Z."/>
            <person name="Zhao W."/>
            <person name="Sun Y."/>
            <person name="Zhang Z."/>
            <person name="Bao J."/>
            <person name="Han Y."/>
            <person name="Dong L."/>
            <person name="Ji J."/>
            <person name="Chen P."/>
            <person name="Wu S."/>
            <person name="Liu J."/>
            <person name="Xiao Y."/>
            <person name="Bu D."/>
            <person name="Tan J."/>
            <person name="Yang L."/>
            <person name="Ye C."/>
            <person name="Zhang J."/>
            <person name="Xu J."/>
            <person name="Zhou Y."/>
            <person name="Yu Y."/>
            <person name="Zhang B."/>
            <person name="Zhuang S."/>
            <person name="Wei H."/>
            <person name="Liu B."/>
            <person name="Lei M."/>
            <person name="Yu H."/>
            <person name="Li Y."/>
            <person name="Xu H."/>
            <person name="Wei S."/>
            <person name="He X."/>
            <person name="Fang L."/>
            <person name="Zhang Z."/>
            <person name="Zhang Y."/>
            <person name="Huang X."/>
            <person name="Su Z."/>
            <person name="Tong W."/>
            <person name="Li J."/>
            <person name="Tong Z."/>
            <person name="Li S."/>
            <person name="Ye J."/>
            <person name="Wang L."/>
            <person name="Fang L."/>
            <person name="Lei T."/>
            <person name="Chen C.-S."/>
            <person name="Chen H.-C."/>
            <person name="Xu Z."/>
            <person name="Li H."/>
            <person name="Huang H."/>
            <person name="Zhang F."/>
            <person name="Xu H."/>
            <person name="Li N."/>
            <person name="Zhao C."/>
            <person name="Li S."/>
            <person name="Dong L."/>
            <person name="Huang Y."/>
            <person name="Li L."/>
            <person name="Xi Y."/>
            <person name="Qi Q."/>
            <person name="Li W."/>
            <person name="Zhang B."/>
            <person name="Hu W."/>
            <person name="Zhang Y."/>
            <person name="Tian X."/>
            <person name="Jiao Y."/>
            <person name="Liang X."/>
            <person name="Jin J."/>
            <person name="Gao L."/>
            <person name="Zheng W."/>
            <person name="Hao B."/>
            <person name="Liu S.-M."/>
            <person name="Wang W."/>
            <person name="Yuan L."/>
            <person name="Cao M."/>
            <person name="McDermott J."/>
            <person name="Samudrala R."/>
            <person name="Wang J."/>
            <person name="Wong G.K.-S."/>
            <person name="Yang H."/>
        </authorList>
    </citation>
    <scope>NUCLEOTIDE SEQUENCE [LARGE SCALE GENOMIC DNA]</scope>
    <source>
        <strain>cv. Nipponbare</strain>
    </source>
</reference>
<reference key="6">
    <citation type="journal article" date="2005" name="Mol. Genet. Genomics">
        <title>Comparative phylogenetic analysis of cystatin gene families from arabidopsis, rice and barley.</title>
        <authorList>
            <person name="Martinez M."/>
            <person name="Abraham Z."/>
            <person name="Carbonero P."/>
            <person name="Diaz I."/>
        </authorList>
    </citation>
    <scope>GENE FAMILY</scope>
</reference>
<comment type="function">
    <text evidence="1">Specific inhibitor of cysteine proteinases. Probably involved in the regulation of endogenous processes and in defense against pests and pathogens (By similarity).</text>
</comment>
<comment type="subcellular location">
    <subcellularLocation>
        <location evidence="3">Secreted</location>
    </subcellularLocation>
</comment>
<comment type="similarity">
    <text evidence="3">Belongs to the cystatin family. Phytocystatin subfamily.</text>
</comment>
<dbReference type="EMBL" id="DP000009">
    <property type="protein sequence ID" value="ABF94587.1"/>
    <property type="molecule type" value="Genomic_DNA"/>
</dbReference>
<dbReference type="EMBL" id="AP008209">
    <property type="status" value="NOT_ANNOTATED_CDS"/>
    <property type="molecule type" value="Genomic_DNA"/>
</dbReference>
<dbReference type="EMBL" id="AP014959">
    <property type="protein sequence ID" value="BAS82902.1"/>
    <property type="molecule type" value="Genomic_DNA"/>
</dbReference>
<dbReference type="EMBL" id="CM000140">
    <property type="protein sequence ID" value="EAZ26018.1"/>
    <property type="molecule type" value="Genomic_DNA"/>
</dbReference>
<dbReference type="SMR" id="Q10Q47"/>
<dbReference type="STRING" id="39947.Q10Q47"/>
<dbReference type="PaxDb" id="39947-Q10Q47"/>
<dbReference type="EnsemblPlants" id="Os03t0210100-00">
    <property type="protein sequence ID" value="Os03t0210100-00"/>
    <property type="gene ID" value="Os03g0210100"/>
</dbReference>
<dbReference type="GeneID" id="107278042"/>
<dbReference type="Gramene" id="Os03t0210100-00">
    <property type="protein sequence ID" value="Os03t0210100-00"/>
    <property type="gene ID" value="Os03g0210100"/>
</dbReference>
<dbReference type="KEGG" id="osa:107278042"/>
<dbReference type="eggNOG" id="ENOG502S46Q">
    <property type="taxonomic scope" value="Eukaryota"/>
</dbReference>
<dbReference type="HOGENOM" id="CLU_113093_2_1_1"/>
<dbReference type="InParanoid" id="Q10Q47"/>
<dbReference type="OMA" id="YERSWEH"/>
<dbReference type="OrthoDB" id="752087at2759"/>
<dbReference type="Proteomes" id="UP000000763">
    <property type="component" value="Chromosome 3"/>
</dbReference>
<dbReference type="Proteomes" id="UP000007752">
    <property type="component" value="Chromosome 3"/>
</dbReference>
<dbReference type="Proteomes" id="UP000059680">
    <property type="component" value="Chromosome 3"/>
</dbReference>
<dbReference type="GO" id="GO:0005576">
    <property type="term" value="C:extracellular region"/>
    <property type="evidence" value="ECO:0007669"/>
    <property type="project" value="UniProtKB-SubCell"/>
</dbReference>
<dbReference type="GO" id="GO:0004869">
    <property type="term" value="F:cysteine-type endopeptidase inhibitor activity"/>
    <property type="evidence" value="ECO:0007669"/>
    <property type="project" value="UniProtKB-KW"/>
</dbReference>
<dbReference type="GO" id="GO:0006952">
    <property type="term" value="P:defense response"/>
    <property type="evidence" value="ECO:0007669"/>
    <property type="project" value="UniProtKB-KW"/>
</dbReference>
<dbReference type="CDD" id="cd00042">
    <property type="entry name" value="CY"/>
    <property type="match status" value="1"/>
</dbReference>
<dbReference type="Gene3D" id="3.10.450.10">
    <property type="match status" value="1"/>
</dbReference>
<dbReference type="InterPro" id="IPR027214">
    <property type="entry name" value="Cystatin"/>
</dbReference>
<dbReference type="InterPro" id="IPR000010">
    <property type="entry name" value="Cystatin_dom"/>
</dbReference>
<dbReference type="InterPro" id="IPR046350">
    <property type="entry name" value="Cystatin_sf"/>
</dbReference>
<dbReference type="InterPro" id="IPR018073">
    <property type="entry name" value="Prot_inh_cystat_CS"/>
</dbReference>
<dbReference type="PANTHER" id="PTHR47116">
    <property type="entry name" value="PHLOEM FILAMENT PROTEIN"/>
    <property type="match status" value="1"/>
</dbReference>
<dbReference type="Pfam" id="PF16845">
    <property type="entry name" value="SQAPI"/>
    <property type="match status" value="1"/>
</dbReference>
<dbReference type="SMART" id="SM00043">
    <property type="entry name" value="CY"/>
    <property type="match status" value="1"/>
</dbReference>
<dbReference type="SUPFAM" id="SSF54403">
    <property type="entry name" value="Cystatin/monellin"/>
    <property type="match status" value="1"/>
</dbReference>
<dbReference type="PROSITE" id="PS00287">
    <property type="entry name" value="CYSTATIN"/>
    <property type="match status" value="1"/>
</dbReference>
<gene>
    <name type="ordered locus">Os03g0210100</name>
    <name type="ordered locus">LOC_Os03g11170</name>
    <name evidence="4" type="ORF">OsJ_09871</name>
</gene>
<evidence type="ECO:0000250" key="1"/>
<evidence type="ECO:0000255" key="2"/>
<evidence type="ECO:0000305" key="3"/>
<evidence type="ECO:0000312" key="4">
    <source>
        <dbReference type="EMBL" id="EAZ26018.1"/>
    </source>
</evidence>
<feature type="signal peptide" evidence="2">
    <location>
        <begin position="1"/>
        <end position="24"/>
    </location>
</feature>
<feature type="chain" id="PRO_0000277504" description="Putative cysteine proteinase inhibitor 7">
    <location>
        <begin position="25"/>
        <end position="117"/>
    </location>
</feature>
<feature type="domain" description="Cystatin">
    <location>
        <begin position="28"/>
        <end position="84"/>
    </location>
</feature>
<feature type="short sequence motif" description="Secondary area of contact" evidence="1">
    <location>
        <begin position="71"/>
        <end position="75"/>
    </location>
</feature>
<feature type="site" description="Reactive site" evidence="1">
    <location>
        <position position="28"/>
    </location>
</feature>